<name>FLGH_PSEPU</name>
<accession>Q52081</accession>
<keyword id="KW-0975">Bacterial flagellum</keyword>
<keyword id="KW-0998">Cell outer membrane</keyword>
<keyword id="KW-0449">Lipoprotein</keyword>
<keyword id="KW-0472">Membrane</keyword>
<keyword id="KW-0564">Palmitate</keyword>
<keyword id="KW-0732">Signal</keyword>
<organism>
    <name type="scientific">Pseudomonas putida</name>
    <name type="common">Arthrobacter siderocapsulatus</name>
    <dbReference type="NCBI Taxonomy" id="303"/>
    <lineage>
        <taxon>Bacteria</taxon>
        <taxon>Pseudomonadati</taxon>
        <taxon>Pseudomonadota</taxon>
        <taxon>Gammaproteobacteria</taxon>
        <taxon>Pseudomonadales</taxon>
        <taxon>Pseudomonadaceae</taxon>
        <taxon>Pseudomonas</taxon>
    </lineage>
</organism>
<protein>
    <recommendedName>
        <fullName>Flagellar L-ring protein</fullName>
    </recommendedName>
    <alternativeName>
        <fullName>Basal body L-ring protein</fullName>
    </alternativeName>
</protein>
<gene>
    <name type="primary">flgH</name>
</gene>
<comment type="function">
    <text>Assembles around the rod to form the L-ring and probably protects the motor/basal body from shearing forces during rotation.</text>
</comment>
<comment type="subunit">
    <text evidence="1">The basal body constitutes a major portion of the flagellar organelle and consists of four rings (L,P,S, and M) mounted on a central rod.</text>
</comment>
<comment type="subcellular location">
    <subcellularLocation>
        <location evidence="1">Cell outer membrane</location>
        <topology evidence="1">Lipid-anchor</topology>
    </subcellularLocation>
    <subcellularLocation>
        <location evidence="1">Bacterial flagellum basal body</location>
    </subcellularLocation>
</comment>
<comment type="similarity">
    <text evidence="4">Belongs to the FlgH family.</text>
</comment>
<proteinExistence type="inferred from homology"/>
<sequence>MNRLLSVFALGGAVLLAGCVAPTPSPTTRTMRRCCRAPRCRQRPTTVRSTRPVSSRTCTATARRSGWVTSSPSRSMSATSASKNAGSQIAKTSKTDIGLTSLFGSTPNTNNPFGGGDLSLEAGYSGDRATKGDSKATQGNTLTGSITVTVAEVLPNGNHRRARQKWLTLNTGEELVRIAGMVRADDIATDNTVPSTRVADARITYSGTGSFADASQPGWLDRFFISPLWPF</sequence>
<dbReference type="EMBL" id="L15385">
    <property type="protein sequence ID" value="AAA62845.1"/>
    <property type="molecule type" value="Genomic_DNA"/>
</dbReference>
<dbReference type="SMR" id="Q52081"/>
<dbReference type="GO" id="GO:0009427">
    <property type="term" value="C:bacterial-type flagellum basal body, distal rod, L ring"/>
    <property type="evidence" value="ECO:0007669"/>
    <property type="project" value="InterPro"/>
</dbReference>
<dbReference type="GO" id="GO:0009279">
    <property type="term" value="C:cell outer membrane"/>
    <property type="evidence" value="ECO:0007669"/>
    <property type="project" value="UniProtKB-SubCell"/>
</dbReference>
<dbReference type="GO" id="GO:0003774">
    <property type="term" value="F:cytoskeletal motor activity"/>
    <property type="evidence" value="ECO:0007669"/>
    <property type="project" value="InterPro"/>
</dbReference>
<dbReference type="GO" id="GO:0071973">
    <property type="term" value="P:bacterial-type flagellum-dependent cell motility"/>
    <property type="evidence" value="ECO:0007669"/>
    <property type="project" value="InterPro"/>
</dbReference>
<dbReference type="HAMAP" id="MF_00415">
    <property type="entry name" value="FlgH"/>
    <property type="match status" value="1"/>
</dbReference>
<dbReference type="InterPro" id="IPR000527">
    <property type="entry name" value="Flag_Lring"/>
</dbReference>
<dbReference type="PANTHER" id="PTHR34933">
    <property type="entry name" value="FLAGELLAR L-RING PROTEIN"/>
    <property type="match status" value="1"/>
</dbReference>
<dbReference type="PANTHER" id="PTHR34933:SF1">
    <property type="entry name" value="FLAGELLAR L-RING PROTEIN"/>
    <property type="match status" value="1"/>
</dbReference>
<dbReference type="Pfam" id="PF02107">
    <property type="entry name" value="FlgH"/>
    <property type="match status" value="1"/>
</dbReference>
<dbReference type="PRINTS" id="PR01008">
    <property type="entry name" value="FLGLRINGFLGH"/>
</dbReference>
<dbReference type="PROSITE" id="PS51257">
    <property type="entry name" value="PROKAR_LIPOPROTEIN"/>
    <property type="match status" value="1"/>
</dbReference>
<evidence type="ECO:0000250" key="1"/>
<evidence type="ECO:0000255" key="2"/>
<evidence type="ECO:0000256" key="3">
    <source>
        <dbReference type="SAM" id="MobiDB-lite"/>
    </source>
</evidence>
<evidence type="ECO:0000305" key="4"/>
<reference key="1">
    <citation type="journal article" date="1994" name="Microbiology">
        <title>Molecular cloning of two Pseudomonas flagellin genes and basal body structural genes.</title>
        <authorList>
            <person name="Winstanley C."/>
            <person name="Morgan J.A."/>
            <person name="Pickup R.W."/>
            <person name="Saunders J.R."/>
        </authorList>
    </citation>
    <scope>NUCLEOTIDE SEQUENCE [GENOMIC DNA]</scope>
    <source>
        <strain>PaW8</strain>
    </source>
</reference>
<feature type="signal peptide" evidence="2">
    <location>
        <begin position="1"/>
        <end position="18"/>
    </location>
</feature>
<feature type="chain" id="PRO_0000009461" description="Flagellar L-ring protein">
    <location>
        <begin position="19"/>
        <end position="231"/>
    </location>
</feature>
<feature type="region of interest" description="Disordered" evidence="3">
    <location>
        <begin position="46"/>
        <end position="90"/>
    </location>
</feature>
<feature type="region of interest" description="Disordered" evidence="3">
    <location>
        <begin position="103"/>
        <end position="140"/>
    </location>
</feature>
<feature type="compositionally biased region" description="Polar residues" evidence="3">
    <location>
        <begin position="47"/>
        <end position="62"/>
    </location>
</feature>
<feature type="compositionally biased region" description="Low complexity" evidence="3">
    <location>
        <begin position="69"/>
        <end position="82"/>
    </location>
</feature>
<feature type="compositionally biased region" description="Polar residues" evidence="3">
    <location>
        <begin position="103"/>
        <end position="112"/>
    </location>
</feature>
<feature type="lipid moiety-binding region" description="N-palmitoyl cysteine" evidence="2">
    <location>
        <position position="19"/>
    </location>
</feature>
<feature type="lipid moiety-binding region" description="S-diacylglycerol cysteine" evidence="2">
    <location>
        <position position="19"/>
    </location>
</feature>